<evidence type="ECO:0000250" key="1"/>
<evidence type="ECO:0000255" key="2"/>
<evidence type="ECO:0000269" key="3">
    <source ref="2"/>
</evidence>
<evidence type="ECO:0000305" key="4"/>
<evidence type="ECO:0000305" key="5">
    <source ref="2"/>
</evidence>
<evidence type="ECO:0000312" key="6">
    <source>
        <dbReference type="EMBL" id="EAY89382.1"/>
    </source>
</evidence>
<evidence type="ECO:0000312" key="7">
    <source>
        <dbReference type="EMBL" id="EAY89383.1"/>
    </source>
</evidence>
<comment type="function">
    <text evidence="3 5">Catalyzes the irreversible reaction from fructose-1,6-bisphosphate to fructose-6-phosphate and inorganic phosphate, to regenerate the primary CO(2) acceptor molecule, ribulose-1,5-bisphosphate (Probable). Involved in the regulation of photosynthetic performance and sucrose synthesis (Ref.2).</text>
</comment>
<comment type="catalytic activity">
    <reaction evidence="3">
        <text>beta-D-fructose 1,6-bisphosphate + H2O = beta-D-fructose 6-phosphate + phosphate</text>
        <dbReference type="Rhea" id="RHEA:11064"/>
        <dbReference type="ChEBI" id="CHEBI:15377"/>
        <dbReference type="ChEBI" id="CHEBI:32966"/>
        <dbReference type="ChEBI" id="CHEBI:43474"/>
        <dbReference type="ChEBI" id="CHEBI:57634"/>
        <dbReference type="EC" id="3.1.3.11"/>
    </reaction>
</comment>
<comment type="cofactor">
    <cofactor evidence="1">
        <name>Mg(2+)</name>
        <dbReference type="ChEBI" id="CHEBI:18420"/>
    </cofactor>
    <text evidence="1">Binds 3 Mg(2+) ions per subunit.</text>
</comment>
<comment type="activity regulation">
    <text evidence="3">Inhibited by sodium chloride.</text>
</comment>
<comment type="pathway">
    <text evidence="4">Carbohydrate biosynthesis; Calvin cycle.</text>
</comment>
<comment type="subunit">
    <text evidence="1">Homotetramer.</text>
</comment>
<comment type="subcellular location">
    <subcellularLocation>
        <location evidence="4">Plastid</location>
        <location evidence="4">Chloroplast stroma</location>
    </subcellularLocation>
</comment>
<comment type="induction">
    <text evidence="1">Light activation through pH changes, Mg(2+) levels and also by light-modulated reduction of essential disulfide groups via the ferredoxin-thioredoxin f system.</text>
</comment>
<comment type="miscellaneous">
    <text evidence="4">In plants there are two FBPase isozymes: one in the cytosol and the other in the chloroplast.</text>
</comment>
<comment type="similarity">
    <text evidence="4">Belongs to the FBPase class 1 family.</text>
</comment>
<sequence>MAAAATTSSHLLLLSRQQAAASLQCGLSFRRQPGRLAGGSSAPSVRCMAAVDTASAPAATEASKKSSYEITTLTTWLLKQEQAGTIDGEMTIVLASISTACKQIASLVQRAPISNLTGVQGAVNVQGEDQKKLDVVSNEVFSNCLKSSGRTGVIASEEEDVPVAVEESYSGNYIVVFDPLDGSSNIDAAVSTGSIFGIYSPNDECLADIADDQNLDQVEQRCIVSVCQPGSNLLAAGYCMYSSSVIFVLTIGTGVYVFTLDPMYGEFVLTQEKVQIPKAGKIYAFNEGNYALWDDKLKSYMDSLKEPGPSGKPYSARYIGSLVGDFHRTLLYGGIYGYPRDQKSKNGKLRLLYECAPMSFIVEQAGGKGSDGHQRILDIMPTEIHQRVPLYIGSVEEVEKVEKFLA</sequence>
<reference key="1">
    <citation type="journal article" date="2005" name="PLoS Biol.">
        <title>The genomes of Oryza sativa: a history of duplications.</title>
        <authorList>
            <person name="Yu J."/>
            <person name="Wang J."/>
            <person name="Lin W."/>
            <person name="Li S."/>
            <person name="Li H."/>
            <person name="Zhou J."/>
            <person name="Ni P."/>
            <person name="Dong W."/>
            <person name="Hu S."/>
            <person name="Zeng C."/>
            <person name="Zhang J."/>
            <person name="Zhang Y."/>
            <person name="Li R."/>
            <person name="Xu Z."/>
            <person name="Li S."/>
            <person name="Li X."/>
            <person name="Zheng H."/>
            <person name="Cong L."/>
            <person name="Lin L."/>
            <person name="Yin J."/>
            <person name="Geng J."/>
            <person name="Li G."/>
            <person name="Shi J."/>
            <person name="Liu J."/>
            <person name="Lv H."/>
            <person name="Li J."/>
            <person name="Wang J."/>
            <person name="Deng Y."/>
            <person name="Ran L."/>
            <person name="Shi X."/>
            <person name="Wang X."/>
            <person name="Wu Q."/>
            <person name="Li C."/>
            <person name="Ren X."/>
            <person name="Wang J."/>
            <person name="Wang X."/>
            <person name="Li D."/>
            <person name="Liu D."/>
            <person name="Zhang X."/>
            <person name="Ji Z."/>
            <person name="Zhao W."/>
            <person name="Sun Y."/>
            <person name="Zhang Z."/>
            <person name="Bao J."/>
            <person name="Han Y."/>
            <person name="Dong L."/>
            <person name="Ji J."/>
            <person name="Chen P."/>
            <person name="Wu S."/>
            <person name="Liu J."/>
            <person name="Xiao Y."/>
            <person name="Bu D."/>
            <person name="Tan J."/>
            <person name="Yang L."/>
            <person name="Ye C."/>
            <person name="Zhang J."/>
            <person name="Xu J."/>
            <person name="Zhou Y."/>
            <person name="Yu Y."/>
            <person name="Zhang B."/>
            <person name="Zhuang S."/>
            <person name="Wei H."/>
            <person name="Liu B."/>
            <person name="Lei M."/>
            <person name="Yu H."/>
            <person name="Li Y."/>
            <person name="Xu H."/>
            <person name="Wei S."/>
            <person name="He X."/>
            <person name="Fang L."/>
            <person name="Zhang Z."/>
            <person name="Zhang Y."/>
            <person name="Huang X."/>
            <person name="Su Z."/>
            <person name="Tong W."/>
            <person name="Li J."/>
            <person name="Tong Z."/>
            <person name="Li S."/>
            <person name="Ye J."/>
            <person name="Wang L."/>
            <person name="Fang L."/>
            <person name="Lei T."/>
            <person name="Chen C.-S."/>
            <person name="Chen H.-C."/>
            <person name="Xu Z."/>
            <person name="Li H."/>
            <person name="Huang H."/>
            <person name="Zhang F."/>
            <person name="Xu H."/>
            <person name="Li N."/>
            <person name="Zhao C."/>
            <person name="Li S."/>
            <person name="Dong L."/>
            <person name="Huang Y."/>
            <person name="Li L."/>
            <person name="Xi Y."/>
            <person name="Qi Q."/>
            <person name="Li W."/>
            <person name="Zhang B."/>
            <person name="Hu W."/>
            <person name="Zhang Y."/>
            <person name="Tian X."/>
            <person name="Jiao Y."/>
            <person name="Liang X."/>
            <person name="Jin J."/>
            <person name="Gao L."/>
            <person name="Zheng W."/>
            <person name="Hao B."/>
            <person name="Liu S.-M."/>
            <person name="Wang W."/>
            <person name="Yuan L."/>
            <person name="Cao M."/>
            <person name="McDermott J."/>
            <person name="Samudrala R."/>
            <person name="Wang J."/>
            <person name="Wong G.K.-S."/>
            <person name="Yang H."/>
        </authorList>
    </citation>
    <scope>NUCLEOTIDE SEQUENCE [LARGE SCALE GENOMIC DNA]</scope>
    <source>
        <strain>cv. 93-11</strain>
    </source>
</reference>
<reference key="2">
    <citation type="journal article" date="2013" name="Plant Cell Tissue Organ Cult.">
        <title>Cloning, characterization and expression of a chloroplastic fructose-1,6-bisphosphatase from Porteresia coarctata conferring salt-tolerance in transgenic tobacco.</title>
        <authorList>
            <person name="Chatterjee J."/>
            <person name="Patra B."/>
            <person name="Mukherjee R."/>
            <person name="Basak P."/>
            <person name="Mukherjee S."/>
            <person name="Ray S."/>
            <person name="Bhattacharyya S."/>
            <person name="Maitra S."/>
            <person name="Ghoshdastidar K."/>
            <person name="Ghosh S."/>
            <person name="Sengupta S."/>
            <person name="Majumder A.L."/>
        </authorList>
    </citation>
    <scope>NUCLEOTIDE SEQUENCE [MRNA] OF 48-406</scope>
    <scope>FUNCTION</scope>
    <scope>CATALYTIC ACTIVITY</scope>
    <scope>ACTIVITY REGULATION</scope>
</reference>
<name>F16P1_ORYSI</name>
<organism>
    <name type="scientific">Oryza sativa subsp. indica</name>
    <name type="common">Rice</name>
    <dbReference type="NCBI Taxonomy" id="39946"/>
    <lineage>
        <taxon>Eukaryota</taxon>
        <taxon>Viridiplantae</taxon>
        <taxon>Streptophyta</taxon>
        <taxon>Embryophyta</taxon>
        <taxon>Tracheophyta</taxon>
        <taxon>Spermatophyta</taxon>
        <taxon>Magnoliopsida</taxon>
        <taxon>Liliopsida</taxon>
        <taxon>Poales</taxon>
        <taxon>Poaceae</taxon>
        <taxon>BOP clade</taxon>
        <taxon>Oryzoideae</taxon>
        <taxon>Oryzeae</taxon>
        <taxon>Oryzinae</taxon>
        <taxon>Oryza</taxon>
        <taxon>Oryza sativa</taxon>
    </lineage>
</organism>
<protein>
    <recommendedName>
        <fullName evidence="4">Fructose-1,6-bisphosphatase, chloroplastic</fullName>
        <shortName evidence="4">FBPase</shortName>
        <ecNumber evidence="3">3.1.3.11</ecNumber>
    </recommendedName>
    <alternativeName>
        <fullName evidence="4">D-fructose-1,6-bisphosphate 1-phosphohydrolase</fullName>
    </alternativeName>
</protein>
<dbReference type="EC" id="3.1.3.11" evidence="3"/>
<dbReference type="EMBL" id="CM000128">
    <property type="protein sequence ID" value="EAY89382.1"/>
    <property type="molecule type" value="Genomic_DNA"/>
</dbReference>
<dbReference type="EMBL" id="CM000128">
    <property type="protein sequence ID" value="EAY89383.1"/>
    <property type="molecule type" value="Genomic_DNA"/>
</dbReference>
<dbReference type="EMBL" id="EU370973">
    <property type="protein sequence ID" value="ABY75186.1"/>
    <property type="molecule type" value="mRNA"/>
</dbReference>
<dbReference type="SMR" id="A2XEX2"/>
<dbReference type="STRING" id="39946.A2XEX2"/>
<dbReference type="EnsemblPlants" id="BGIOSGA011042-TA">
    <property type="protein sequence ID" value="BGIOSGA011042-PA"/>
    <property type="gene ID" value="BGIOSGA011042"/>
</dbReference>
<dbReference type="EnsemblPlants" id="BGIOSGA011043-TA">
    <property type="protein sequence ID" value="BGIOSGA011043-PA"/>
    <property type="gene ID" value="BGIOSGA011043"/>
</dbReference>
<dbReference type="EnsemblPlants" id="OsGoSa_03g0011980.01">
    <property type="protein sequence ID" value="OsGoSa_03g0011980.01"/>
    <property type="gene ID" value="OsGoSa_03g0011980"/>
</dbReference>
<dbReference type="EnsemblPlants" id="OsIR64_03g0011790.02">
    <property type="protein sequence ID" value="OsIR64_03g0011790.02"/>
    <property type="gene ID" value="OsIR64_03g0011790"/>
</dbReference>
<dbReference type="EnsemblPlants" id="OsKYG_03g0011990.01">
    <property type="protein sequence ID" value="OsKYG_03g0011990.01"/>
    <property type="gene ID" value="OsKYG_03g0011990"/>
</dbReference>
<dbReference type="EnsemblPlants" id="OsLaMu_03g0011870.01">
    <property type="protein sequence ID" value="OsLaMu_03g0011870.01"/>
    <property type="gene ID" value="OsLaMu_03g0011870"/>
</dbReference>
<dbReference type="EnsemblPlants" id="OsLima_03g0011920.01">
    <property type="protein sequence ID" value="OsLima_03g0011920.01"/>
    <property type="gene ID" value="OsLima_03g0011920"/>
</dbReference>
<dbReference type="EnsemblPlants" id="OsLiXu_03g0011930.01">
    <property type="protein sequence ID" value="OsLiXu_03g0011930.01"/>
    <property type="gene ID" value="OsLiXu_03g0011930"/>
</dbReference>
<dbReference type="EnsemblPlants" id="OsMH63_03G011880_02">
    <property type="protein sequence ID" value="OsMH63_03G011880_02"/>
    <property type="gene ID" value="OsMH63_03G011880"/>
</dbReference>
<dbReference type="EnsemblPlants" id="OsPr106_03g0011890.01">
    <property type="protein sequence ID" value="OsPr106_03g0011890.01"/>
    <property type="gene ID" value="OsPr106_03g0011890"/>
</dbReference>
<dbReference type="EnsemblPlants" id="OsZS97_03G011870_01">
    <property type="protein sequence ID" value="OsZS97_03G011870_01"/>
    <property type="gene ID" value="OsZS97_03G011870"/>
</dbReference>
<dbReference type="Gramene" id="BGIOSGA011042-TA">
    <property type="protein sequence ID" value="BGIOSGA011042-PA"/>
    <property type="gene ID" value="BGIOSGA011042"/>
</dbReference>
<dbReference type="Gramene" id="BGIOSGA011043-TA">
    <property type="protein sequence ID" value="BGIOSGA011043-PA"/>
    <property type="gene ID" value="BGIOSGA011043"/>
</dbReference>
<dbReference type="Gramene" id="OsGoSa_03g0011980.01">
    <property type="protein sequence ID" value="OsGoSa_03g0011980.01"/>
    <property type="gene ID" value="OsGoSa_03g0011980"/>
</dbReference>
<dbReference type="Gramene" id="OsIR64_03g0011790.02">
    <property type="protein sequence ID" value="OsIR64_03g0011790.02"/>
    <property type="gene ID" value="OsIR64_03g0011790"/>
</dbReference>
<dbReference type="Gramene" id="OsKYG_03g0011990.01">
    <property type="protein sequence ID" value="OsKYG_03g0011990.01"/>
    <property type="gene ID" value="OsKYG_03g0011990"/>
</dbReference>
<dbReference type="Gramene" id="OsLaMu_03g0011870.01">
    <property type="protein sequence ID" value="OsLaMu_03g0011870.01"/>
    <property type="gene ID" value="OsLaMu_03g0011870"/>
</dbReference>
<dbReference type="Gramene" id="OsLima_03g0011920.01">
    <property type="protein sequence ID" value="OsLima_03g0011920.01"/>
    <property type="gene ID" value="OsLima_03g0011920"/>
</dbReference>
<dbReference type="Gramene" id="OsLiXu_03g0011930.01">
    <property type="protein sequence ID" value="OsLiXu_03g0011930.01"/>
    <property type="gene ID" value="OsLiXu_03g0011930"/>
</dbReference>
<dbReference type="Gramene" id="OsMH63_03G011880_02">
    <property type="protein sequence ID" value="OsMH63_03G011880_02"/>
    <property type="gene ID" value="OsMH63_03G011880"/>
</dbReference>
<dbReference type="Gramene" id="OsPr106_03g0011890.01">
    <property type="protein sequence ID" value="OsPr106_03g0011890.01"/>
    <property type="gene ID" value="OsPr106_03g0011890"/>
</dbReference>
<dbReference type="Gramene" id="OsZS97_03G011870_01">
    <property type="protein sequence ID" value="OsZS97_03G011870_01"/>
    <property type="gene ID" value="OsZS97_03G011870"/>
</dbReference>
<dbReference type="HOGENOM" id="CLU_039977_1_0_1"/>
<dbReference type="OMA" id="RCMAVGT"/>
<dbReference type="OrthoDB" id="10256725at2759"/>
<dbReference type="UniPathway" id="UPA00116"/>
<dbReference type="Proteomes" id="UP000007015">
    <property type="component" value="Chromosome 3"/>
</dbReference>
<dbReference type="GO" id="GO:0009570">
    <property type="term" value="C:chloroplast stroma"/>
    <property type="evidence" value="ECO:0007669"/>
    <property type="project" value="UniProtKB-SubCell"/>
</dbReference>
<dbReference type="GO" id="GO:0005829">
    <property type="term" value="C:cytosol"/>
    <property type="evidence" value="ECO:0007669"/>
    <property type="project" value="TreeGrafter"/>
</dbReference>
<dbReference type="GO" id="GO:0042132">
    <property type="term" value="F:fructose 1,6-bisphosphate 1-phosphatase activity"/>
    <property type="evidence" value="ECO:0007669"/>
    <property type="project" value="UniProtKB-EC"/>
</dbReference>
<dbReference type="GO" id="GO:0046872">
    <property type="term" value="F:metal ion binding"/>
    <property type="evidence" value="ECO:0007669"/>
    <property type="project" value="UniProtKB-KW"/>
</dbReference>
<dbReference type="GO" id="GO:0030388">
    <property type="term" value="P:fructose 1,6-bisphosphate metabolic process"/>
    <property type="evidence" value="ECO:0007669"/>
    <property type="project" value="TreeGrafter"/>
</dbReference>
<dbReference type="GO" id="GO:0006002">
    <property type="term" value="P:fructose 6-phosphate metabolic process"/>
    <property type="evidence" value="ECO:0007669"/>
    <property type="project" value="TreeGrafter"/>
</dbReference>
<dbReference type="GO" id="GO:0006000">
    <property type="term" value="P:fructose metabolic process"/>
    <property type="evidence" value="ECO:0007669"/>
    <property type="project" value="TreeGrafter"/>
</dbReference>
<dbReference type="GO" id="GO:0006094">
    <property type="term" value="P:gluconeogenesis"/>
    <property type="evidence" value="ECO:0007669"/>
    <property type="project" value="TreeGrafter"/>
</dbReference>
<dbReference type="GO" id="GO:0019253">
    <property type="term" value="P:reductive pentose-phosphate cycle"/>
    <property type="evidence" value="ECO:0007669"/>
    <property type="project" value="UniProtKB-UniPathway"/>
</dbReference>
<dbReference type="GO" id="GO:0005986">
    <property type="term" value="P:sucrose biosynthetic process"/>
    <property type="evidence" value="ECO:0007669"/>
    <property type="project" value="TreeGrafter"/>
</dbReference>
<dbReference type="CDD" id="cd00354">
    <property type="entry name" value="FBPase"/>
    <property type="match status" value="1"/>
</dbReference>
<dbReference type="FunFam" id="3.40.190.80:FF:000001">
    <property type="entry name" value="Fructose-1,6-bisphosphatase class 1"/>
    <property type="match status" value="1"/>
</dbReference>
<dbReference type="FunFam" id="3.30.540.10:FF:000014">
    <property type="entry name" value="Fructose-1,6-bisphosphatase, chloroplastic"/>
    <property type="match status" value="1"/>
</dbReference>
<dbReference type="Gene3D" id="3.40.190.80">
    <property type="match status" value="1"/>
</dbReference>
<dbReference type="Gene3D" id="3.30.540.10">
    <property type="entry name" value="Fructose-1,6-Bisphosphatase, subunit A, domain 1"/>
    <property type="match status" value="1"/>
</dbReference>
<dbReference type="HAMAP" id="MF_01855">
    <property type="entry name" value="FBPase_class1"/>
    <property type="match status" value="1"/>
</dbReference>
<dbReference type="InterPro" id="IPR044015">
    <property type="entry name" value="FBPase_C_dom"/>
</dbReference>
<dbReference type="InterPro" id="IPR000146">
    <property type="entry name" value="FBPase_class-1"/>
</dbReference>
<dbReference type="InterPro" id="IPR033391">
    <property type="entry name" value="FBPase_N"/>
</dbReference>
<dbReference type="InterPro" id="IPR028343">
    <property type="entry name" value="FBPtase"/>
</dbReference>
<dbReference type="InterPro" id="IPR020548">
    <property type="entry name" value="Fructose_bisphosphatase_AS"/>
</dbReference>
<dbReference type="NCBIfam" id="NF006778">
    <property type="entry name" value="PRK09293.1-1"/>
    <property type="match status" value="1"/>
</dbReference>
<dbReference type="PANTHER" id="PTHR11556">
    <property type="entry name" value="FRUCTOSE-1,6-BISPHOSPHATASE-RELATED"/>
    <property type="match status" value="1"/>
</dbReference>
<dbReference type="PANTHER" id="PTHR11556:SF1">
    <property type="entry name" value="FRUCTOSE-BISPHOSPHATASE"/>
    <property type="match status" value="1"/>
</dbReference>
<dbReference type="Pfam" id="PF00316">
    <property type="entry name" value="FBPase"/>
    <property type="match status" value="1"/>
</dbReference>
<dbReference type="Pfam" id="PF18913">
    <property type="entry name" value="FBPase_C"/>
    <property type="match status" value="1"/>
</dbReference>
<dbReference type="PIRSF" id="PIRSF500210">
    <property type="entry name" value="FBPtase"/>
    <property type="match status" value="1"/>
</dbReference>
<dbReference type="PIRSF" id="PIRSF000904">
    <property type="entry name" value="FBPtase_SBPase"/>
    <property type="match status" value="1"/>
</dbReference>
<dbReference type="PRINTS" id="PR00115">
    <property type="entry name" value="F16BPHPHTASE"/>
</dbReference>
<dbReference type="SUPFAM" id="SSF56655">
    <property type="entry name" value="Carbohydrate phosphatase"/>
    <property type="match status" value="1"/>
</dbReference>
<dbReference type="PROSITE" id="PS00124">
    <property type="entry name" value="FBPASE"/>
    <property type="match status" value="1"/>
</dbReference>
<keyword id="KW-0113">Calvin cycle</keyword>
<keyword id="KW-0119">Carbohydrate metabolism</keyword>
<keyword id="KW-0150">Chloroplast</keyword>
<keyword id="KW-1015">Disulfide bond</keyword>
<keyword id="KW-0378">Hydrolase</keyword>
<keyword id="KW-0460">Magnesium</keyword>
<keyword id="KW-0479">Metal-binding</keyword>
<keyword id="KW-0934">Plastid</keyword>
<keyword id="KW-1185">Reference proteome</keyword>
<keyword id="KW-0809">Transit peptide</keyword>
<gene>
    <name evidence="6" type="ORF">OsI_10887</name>
    <name evidence="7" type="ORF">OsI_10888</name>
</gene>
<feature type="transit peptide" description="Chloroplast" evidence="2">
    <location>
        <begin position="1"/>
        <end position="47"/>
    </location>
</feature>
<feature type="chain" id="PRO_0000438734" description="Fructose-1,6-bisphosphatase, chloroplastic">
    <location>
        <begin position="48"/>
        <end position="406"/>
    </location>
</feature>
<feature type="binding site" evidence="1">
    <location>
        <position position="128"/>
    </location>
    <ligand>
        <name>Mg(2+)</name>
        <dbReference type="ChEBI" id="CHEBI:18420"/>
        <label>1</label>
    </ligand>
</feature>
<feature type="binding site" evidence="1">
    <location>
        <position position="157"/>
    </location>
    <ligand>
        <name>Mg(2+)</name>
        <dbReference type="ChEBI" id="CHEBI:18420"/>
        <label>1</label>
    </ligand>
</feature>
<feature type="binding site" evidence="1">
    <location>
        <position position="157"/>
    </location>
    <ligand>
        <name>Mg(2+)</name>
        <dbReference type="ChEBI" id="CHEBI:18420"/>
        <label>2</label>
    </ligand>
</feature>
<feature type="binding site" evidence="1">
    <location>
        <position position="178"/>
    </location>
    <ligand>
        <name>Mg(2+)</name>
        <dbReference type="ChEBI" id="CHEBI:18420"/>
        <label>2</label>
    </ligand>
</feature>
<feature type="binding site" evidence="1">
    <location>
        <position position="178"/>
    </location>
    <ligand>
        <name>Mg(2+)</name>
        <dbReference type="ChEBI" id="CHEBI:18420"/>
        <label>3</label>
    </ligand>
</feature>
<feature type="binding site" evidence="1">
    <location>
        <position position="180"/>
    </location>
    <ligand>
        <name>Mg(2+)</name>
        <dbReference type="ChEBI" id="CHEBI:18420"/>
        <label>2</label>
    </ligand>
</feature>
<feature type="binding site" evidence="1">
    <location>
        <begin position="181"/>
        <end position="184"/>
    </location>
    <ligand>
        <name>substrate</name>
    </ligand>
</feature>
<feature type="binding site" evidence="1">
    <location>
        <position position="181"/>
    </location>
    <ligand>
        <name>Mg(2+)</name>
        <dbReference type="ChEBI" id="CHEBI:18420"/>
        <label>3</label>
    </ligand>
</feature>
<feature type="binding site" evidence="1">
    <location>
        <position position="286"/>
    </location>
    <ligand>
        <name>substrate</name>
    </ligand>
</feature>
<feature type="binding site" evidence="1">
    <location>
        <position position="318"/>
    </location>
    <ligand>
        <name>substrate</name>
    </ligand>
</feature>
<feature type="binding site" evidence="1">
    <location>
        <position position="336"/>
    </location>
    <ligand>
        <name>substrate</name>
    </ligand>
</feature>
<feature type="binding site" evidence="1">
    <location>
        <position position="338"/>
    </location>
    <ligand>
        <name>substrate</name>
    </ligand>
</feature>
<feature type="binding site" evidence="1">
    <location>
        <position position="348"/>
    </location>
    <ligand>
        <name>substrate</name>
    </ligand>
</feature>
<feature type="binding site" evidence="1">
    <location>
        <position position="354"/>
    </location>
    <ligand>
        <name>Mg(2+)</name>
        <dbReference type="ChEBI" id="CHEBI:18420"/>
        <label>3</label>
    </ligand>
</feature>
<feature type="disulfide bond" description="Redox-active (light-modulated)" evidence="1">
    <location>
        <begin position="222"/>
        <end position="227"/>
    </location>
</feature>
<feature type="sequence conflict" description="In Ref. 2; ABY75186." evidence="4" ref="2">
    <original>K</original>
    <variation>R</variation>
    <location>
        <position position="343"/>
    </location>
</feature>
<accession>A2XEX2</accession>
<accession>B0LSR2</accession>
<proteinExistence type="evidence at protein level"/>